<proteinExistence type="inferred from homology"/>
<evidence type="ECO:0000255" key="1">
    <source>
        <dbReference type="HAMAP-Rule" id="MF_01333"/>
    </source>
</evidence>
<evidence type="ECO:0000305" key="2"/>
<organism>
    <name type="scientific">Roseiflexus castenholzii (strain DSM 13941 / HLO8)</name>
    <dbReference type="NCBI Taxonomy" id="383372"/>
    <lineage>
        <taxon>Bacteria</taxon>
        <taxon>Bacillati</taxon>
        <taxon>Chloroflexota</taxon>
        <taxon>Chloroflexia</taxon>
        <taxon>Chloroflexales</taxon>
        <taxon>Roseiflexineae</taxon>
        <taxon>Roseiflexaceae</taxon>
        <taxon>Roseiflexus</taxon>
    </lineage>
</organism>
<reference key="1">
    <citation type="submission" date="2007-08" db="EMBL/GenBank/DDBJ databases">
        <title>Complete sequence of Roseiflexus castenholzii DSM 13941.</title>
        <authorList>
            <consortium name="US DOE Joint Genome Institute"/>
            <person name="Copeland A."/>
            <person name="Lucas S."/>
            <person name="Lapidus A."/>
            <person name="Barry K."/>
            <person name="Glavina del Rio T."/>
            <person name="Dalin E."/>
            <person name="Tice H."/>
            <person name="Pitluck S."/>
            <person name="Thompson L.S."/>
            <person name="Brettin T."/>
            <person name="Bruce D."/>
            <person name="Detter J.C."/>
            <person name="Han C."/>
            <person name="Tapia R."/>
            <person name="Schmutz J."/>
            <person name="Larimer F."/>
            <person name="Land M."/>
            <person name="Hauser L."/>
            <person name="Kyrpides N."/>
            <person name="Mikhailova N."/>
            <person name="Bryant D.A."/>
            <person name="Hanada S."/>
            <person name="Tsukatani Y."/>
            <person name="Richardson P."/>
        </authorList>
    </citation>
    <scope>NUCLEOTIDE SEQUENCE [LARGE SCALE GENOMIC DNA]</scope>
    <source>
        <strain>DSM 13941 / HLO8</strain>
    </source>
</reference>
<feature type="chain" id="PRO_1000142440" description="Large ribosomal subunit protein uL5">
    <location>
        <begin position="1"/>
        <end position="180"/>
    </location>
</feature>
<name>RL5_ROSCS</name>
<dbReference type="EMBL" id="CP000804">
    <property type="protein sequence ID" value="ABU60047.1"/>
    <property type="molecule type" value="Genomic_DNA"/>
</dbReference>
<dbReference type="RefSeq" id="WP_012122469.1">
    <property type="nucleotide sequence ID" value="NC_009767.1"/>
</dbReference>
<dbReference type="SMR" id="A7NR51"/>
<dbReference type="STRING" id="383372.Rcas_4014"/>
<dbReference type="KEGG" id="rca:Rcas_4014"/>
<dbReference type="eggNOG" id="COG0094">
    <property type="taxonomic scope" value="Bacteria"/>
</dbReference>
<dbReference type="HOGENOM" id="CLU_061015_2_1_0"/>
<dbReference type="OrthoDB" id="9806626at2"/>
<dbReference type="Proteomes" id="UP000000263">
    <property type="component" value="Chromosome"/>
</dbReference>
<dbReference type="GO" id="GO:1990904">
    <property type="term" value="C:ribonucleoprotein complex"/>
    <property type="evidence" value="ECO:0007669"/>
    <property type="project" value="UniProtKB-KW"/>
</dbReference>
<dbReference type="GO" id="GO:0005840">
    <property type="term" value="C:ribosome"/>
    <property type="evidence" value="ECO:0007669"/>
    <property type="project" value="UniProtKB-KW"/>
</dbReference>
<dbReference type="GO" id="GO:0019843">
    <property type="term" value="F:rRNA binding"/>
    <property type="evidence" value="ECO:0007669"/>
    <property type="project" value="UniProtKB-UniRule"/>
</dbReference>
<dbReference type="GO" id="GO:0003735">
    <property type="term" value="F:structural constituent of ribosome"/>
    <property type="evidence" value="ECO:0007669"/>
    <property type="project" value="InterPro"/>
</dbReference>
<dbReference type="GO" id="GO:0000049">
    <property type="term" value="F:tRNA binding"/>
    <property type="evidence" value="ECO:0007669"/>
    <property type="project" value="UniProtKB-UniRule"/>
</dbReference>
<dbReference type="GO" id="GO:0006412">
    <property type="term" value="P:translation"/>
    <property type="evidence" value="ECO:0007669"/>
    <property type="project" value="UniProtKB-UniRule"/>
</dbReference>
<dbReference type="FunFam" id="3.30.1440.10:FF:000001">
    <property type="entry name" value="50S ribosomal protein L5"/>
    <property type="match status" value="1"/>
</dbReference>
<dbReference type="Gene3D" id="3.30.1440.10">
    <property type="match status" value="1"/>
</dbReference>
<dbReference type="HAMAP" id="MF_01333_B">
    <property type="entry name" value="Ribosomal_uL5_B"/>
    <property type="match status" value="1"/>
</dbReference>
<dbReference type="InterPro" id="IPR002132">
    <property type="entry name" value="Ribosomal_uL5"/>
</dbReference>
<dbReference type="InterPro" id="IPR020930">
    <property type="entry name" value="Ribosomal_uL5_bac-type"/>
</dbReference>
<dbReference type="InterPro" id="IPR031309">
    <property type="entry name" value="Ribosomal_uL5_C"/>
</dbReference>
<dbReference type="InterPro" id="IPR020929">
    <property type="entry name" value="Ribosomal_uL5_CS"/>
</dbReference>
<dbReference type="InterPro" id="IPR022803">
    <property type="entry name" value="Ribosomal_uL5_dom_sf"/>
</dbReference>
<dbReference type="InterPro" id="IPR031310">
    <property type="entry name" value="Ribosomal_uL5_N"/>
</dbReference>
<dbReference type="NCBIfam" id="NF000585">
    <property type="entry name" value="PRK00010.1"/>
    <property type="match status" value="1"/>
</dbReference>
<dbReference type="PANTHER" id="PTHR11994">
    <property type="entry name" value="60S RIBOSOMAL PROTEIN L11-RELATED"/>
    <property type="match status" value="1"/>
</dbReference>
<dbReference type="Pfam" id="PF00281">
    <property type="entry name" value="Ribosomal_L5"/>
    <property type="match status" value="1"/>
</dbReference>
<dbReference type="Pfam" id="PF00673">
    <property type="entry name" value="Ribosomal_L5_C"/>
    <property type="match status" value="1"/>
</dbReference>
<dbReference type="PIRSF" id="PIRSF002161">
    <property type="entry name" value="Ribosomal_L5"/>
    <property type="match status" value="1"/>
</dbReference>
<dbReference type="SUPFAM" id="SSF55282">
    <property type="entry name" value="RL5-like"/>
    <property type="match status" value="1"/>
</dbReference>
<dbReference type="PROSITE" id="PS00358">
    <property type="entry name" value="RIBOSOMAL_L5"/>
    <property type="match status" value="1"/>
</dbReference>
<gene>
    <name evidence="1" type="primary">rplE</name>
    <name type="ordered locus">Rcas_4014</name>
</gene>
<comment type="function">
    <text evidence="1">This is one of the proteins that bind and probably mediate the attachment of the 5S RNA into the large ribosomal subunit, where it forms part of the central protuberance. In the 70S ribosome it contacts protein S13 of the 30S subunit (bridge B1b), connecting the 2 subunits; this bridge is implicated in subunit movement. Contacts the P site tRNA; the 5S rRNA and some of its associated proteins might help stabilize positioning of ribosome-bound tRNAs.</text>
</comment>
<comment type="subunit">
    <text evidence="1">Part of the 50S ribosomal subunit; part of the 5S rRNA/L5/L18/L25 subcomplex. Contacts the 5S rRNA and the P site tRNA. Forms a bridge to the 30S subunit in the 70S ribosome.</text>
</comment>
<comment type="similarity">
    <text evidence="1">Belongs to the universal ribosomal protein uL5 family.</text>
</comment>
<sequence length="180" mass="20381">MVPRLKEKYQTEVVPALMQEFQYRSVMQAPRLEKIVLNIGLGEAIQNSKALDAATSDLAAIAGQKPVITRARKSIAAFKVRQGMPIGVMVTLRGPRMWSFFDRLVNLVLPRLRDFRGVSRRSFDGRGNYSLGLREQIVFPEIDYDKVDKLRGLEVVIVTTAPDDEQGYALLKRLGMPFRD</sequence>
<protein>
    <recommendedName>
        <fullName evidence="1">Large ribosomal subunit protein uL5</fullName>
    </recommendedName>
    <alternativeName>
        <fullName evidence="2">50S ribosomal protein L5</fullName>
    </alternativeName>
</protein>
<accession>A7NR51</accession>
<keyword id="KW-1185">Reference proteome</keyword>
<keyword id="KW-0687">Ribonucleoprotein</keyword>
<keyword id="KW-0689">Ribosomal protein</keyword>
<keyword id="KW-0694">RNA-binding</keyword>
<keyword id="KW-0699">rRNA-binding</keyword>
<keyword id="KW-0820">tRNA-binding</keyword>